<feature type="chain" id="PRO_0000193508" description="ATP synthase subunit O, mitochondrial">
    <location>
        <begin position="1"/>
        <end position="32" status="greater than"/>
    </location>
</feature>
<feature type="non-terminal residue">
    <location>
        <position position="32"/>
    </location>
</feature>
<reference key="1">
    <citation type="journal article" date="1992" name="Eur. J. Biochem.">
        <title>Plant mitochondrial F0F1 ATP synthase. Identification of the individual subunits and properties of the purified spinach leaf mitochondrial ATP synthase.</title>
        <authorList>
            <person name="Hamasur B."/>
            <person name="Glaser E."/>
        </authorList>
    </citation>
    <scope>PROTEIN SEQUENCE</scope>
    <source>
        <strain>cv. Medania</strain>
        <tissue>Leaf mesophyll</tissue>
    </source>
</reference>
<dbReference type="PIR" id="S21246">
    <property type="entry name" value="S21246"/>
</dbReference>
<dbReference type="Proteomes" id="UP001155700">
    <property type="component" value="Unplaced"/>
</dbReference>
<dbReference type="GO" id="GO:0005743">
    <property type="term" value="C:mitochondrial inner membrane"/>
    <property type="evidence" value="ECO:0007669"/>
    <property type="project" value="UniProtKB-SubCell"/>
</dbReference>
<dbReference type="GO" id="GO:0006754">
    <property type="term" value="P:ATP biosynthetic process"/>
    <property type="evidence" value="ECO:0007669"/>
    <property type="project" value="UniProtKB-KW"/>
</dbReference>
<dbReference type="GO" id="GO:1902600">
    <property type="term" value="P:proton transmembrane transport"/>
    <property type="evidence" value="ECO:0007669"/>
    <property type="project" value="UniProtKB-KW"/>
</dbReference>
<comment type="function">
    <text>Mitochondrial membrane ATP synthase (F(1)F(0) ATP synthase or Complex V) produces ATP from ADP in the presence of a proton gradient across the membrane which is generated by electron transport complexes of the respiratory chain. F-type ATPases consist of two structural domains, F(1) - containing the extramembraneous catalytic core and F(0) - containing the membrane proton channel, linked together by a central stalk and a peripheral stalk. During catalysis, ATP synthesis in the catalytic domain of F(1) is coupled via a rotary mechanism of the central stalk subunits to proton translocation. Part of the complex F(0) domain and the peripheric stalk, which acts as a stator to hold the catalytic alpha(3)beta(3) subcomplex and subunit a/ATP6 static relative to the rotary elements.</text>
</comment>
<comment type="subunit">
    <text>F-type ATPases have 2 components, CF(1) - the catalytic core - and CF(0) - the membrane proton channel. CF(1) has five subunits: alpha(3), beta(3), gamma(1), delta(1), epsilon(1). CF(0) has three main subunits: a, b and c.</text>
</comment>
<comment type="subcellular location">
    <subcellularLocation>
        <location>Mitochondrion</location>
    </subcellularLocation>
    <subcellularLocation>
        <location>Mitochondrion inner membrane</location>
    </subcellularLocation>
</comment>
<comment type="similarity">
    <text evidence="1">Belongs to the ATPase delta chain family.</text>
</comment>
<proteinExistence type="evidence at protein level"/>
<evidence type="ECO:0000305" key="1"/>
<keyword id="KW-0066">ATP synthesis</keyword>
<keyword id="KW-0903">Direct protein sequencing</keyword>
<keyword id="KW-0375">Hydrogen ion transport</keyword>
<keyword id="KW-0406">Ion transport</keyword>
<keyword id="KW-0472">Membrane</keyword>
<keyword id="KW-0496">Mitochondrion</keyword>
<keyword id="KW-0999">Mitochondrion inner membrane</keyword>
<keyword id="KW-1185">Reference proteome</keyword>
<keyword id="KW-0813">Transport</keyword>
<accession>P80087</accession>
<organism>
    <name type="scientific">Spinacia oleracea</name>
    <name type="common">Spinach</name>
    <dbReference type="NCBI Taxonomy" id="3562"/>
    <lineage>
        <taxon>Eukaryota</taxon>
        <taxon>Viridiplantae</taxon>
        <taxon>Streptophyta</taxon>
        <taxon>Embryophyta</taxon>
        <taxon>Tracheophyta</taxon>
        <taxon>Spermatophyta</taxon>
        <taxon>Magnoliopsida</taxon>
        <taxon>eudicotyledons</taxon>
        <taxon>Gunneridae</taxon>
        <taxon>Pentapetalae</taxon>
        <taxon>Caryophyllales</taxon>
        <taxon>Chenopodiaceae</taxon>
        <taxon>Chenopodioideae</taxon>
        <taxon>Anserineae</taxon>
        <taxon>Spinacia</taxon>
    </lineage>
</organism>
<sequence length="32" mass="3447">ATSAPAKHDNIXVPIAMFGGSXNYASHLYLYD</sequence>
<protein>
    <recommendedName>
        <fullName>ATP synthase subunit O, mitochondrial</fullName>
    </recommendedName>
    <alternativeName>
        <fullName>Oligomycin sensitivity conferral protein</fullName>
        <shortName>OSCP</shortName>
    </alternativeName>
</protein>
<name>ATPO_SPIOL</name>